<feature type="chain" id="PRO_0000151579" description="Arginine--tRNA ligase">
    <location>
        <begin position="1"/>
        <end position="550"/>
    </location>
</feature>
<feature type="short sequence motif" description="'HIGH' region">
    <location>
        <begin position="130"/>
        <end position="140"/>
    </location>
</feature>
<feature type="sequence conflict" description="In Ref. 1; AAD32590." evidence="2" ref="1">
    <original>A</original>
    <variation>T</variation>
    <location>
        <position position="149"/>
    </location>
</feature>
<feature type="sequence conflict" description="In Ref. 1; AAD32590." evidence="2" ref="1">
    <original>D</original>
    <variation>N</variation>
    <location>
        <position position="232"/>
    </location>
</feature>
<feature type="sequence conflict" description="In Ref. 1; AAD32590." evidence="2" ref="1">
    <original>EDS</original>
    <variation>GDW</variation>
    <location>
        <begin position="255"/>
        <end position="257"/>
    </location>
</feature>
<feature type="sequence conflict" description="In Ref. 1; AAD32590." evidence="2" ref="1">
    <original>L</original>
    <variation>V</variation>
    <location>
        <position position="331"/>
    </location>
</feature>
<comment type="catalytic activity">
    <reaction>
        <text>tRNA(Arg) + L-arginine + ATP = L-arginyl-tRNA(Arg) + AMP + diphosphate</text>
        <dbReference type="Rhea" id="RHEA:20301"/>
        <dbReference type="Rhea" id="RHEA-COMP:9658"/>
        <dbReference type="Rhea" id="RHEA-COMP:9673"/>
        <dbReference type="ChEBI" id="CHEBI:30616"/>
        <dbReference type="ChEBI" id="CHEBI:32682"/>
        <dbReference type="ChEBI" id="CHEBI:33019"/>
        <dbReference type="ChEBI" id="CHEBI:78442"/>
        <dbReference type="ChEBI" id="CHEBI:78513"/>
        <dbReference type="ChEBI" id="CHEBI:456215"/>
        <dbReference type="EC" id="6.1.1.19"/>
    </reaction>
</comment>
<comment type="subunit">
    <text evidence="1">Monomer.</text>
</comment>
<comment type="subcellular location">
    <subcellularLocation>
        <location evidence="1">Cytoplasm</location>
    </subcellularLocation>
</comment>
<comment type="similarity">
    <text evidence="2">Belongs to the class-I aminoacyl-tRNA synthetase family.</text>
</comment>
<protein>
    <recommendedName>
        <fullName>Arginine--tRNA ligase</fullName>
        <ecNumber>6.1.1.19</ecNumber>
    </recommendedName>
    <alternativeName>
        <fullName>Arginyl-tRNA synthetase</fullName>
        <shortName>ArgRS</shortName>
    </alternativeName>
</protein>
<sequence length="550" mass="59429">MTPADLAELLKATAAAVLTEHDLDVAALPATVTVERPRNPEHGDYATNLALQLGKKVGVNPRELAGWLATALTAADGIAVAEVAGPGFVNLRIEASAQGVIITNVLAAEGSYGSSDQYAGRNVNLEFVSANPTGPIHIGGTRWAAVGDALGRLLATQGAAVTREYYFNDHGAQIDRFVNSLIASAKGEPTPEDGYAGDYIVDIAQQVIAKAPDVLGLPEDQQRETFRAIGVDLMFTHIKQSLHDFGTDFDVYTHEDSMHTSGRVDQAITQLREAGSIYEKDGAVWLRTTDFGDDKDRVVIKSDGNAAYIAGDLAYYLDKRKRGFDLCIYMLGADHHGYIARLKAAAAALGDDPDTVEVLIGQMVNLVRDGQPVRMSKRAGTVITLDDLVEAIGVDAARYALIRSSVDTPIDIDLELWSSASNENPVYYVQYAHARLCALARNAADLGVSVNTDHLDLLTHEKEGALIRNLGEFPRVLKTAASLREPHRVCRYLEDLAGDYHRFYDSCRVLPQGDEEPGDLHSARLALCRATRQVIANGLAILGVSAPERM</sequence>
<accession>Q9X5M0</accession>
<accession>A0R223</accession>
<accession>I7G6F4</accession>
<dbReference type="EC" id="6.1.1.19"/>
<dbReference type="EMBL" id="AF126720">
    <property type="protein sequence ID" value="AAD32590.1"/>
    <property type="molecule type" value="Genomic_DNA"/>
</dbReference>
<dbReference type="EMBL" id="CP000480">
    <property type="protein sequence ID" value="ABK70921.1"/>
    <property type="molecule type" value="Genomic_DNA"/>
</dbReference>
<dbReference type="EMBL" id="CP001663">
    <property type="protein sequence ID" value="AFP41277.1"/>
    <property type="molecule type" value="Genomic_DNA"/>
</dbReference>
<dbReference type="RefSeq" id="WP_011730214.1">
    <property type="nucleotide sequence ID" value="NZ_SIJM01000019.1"/>
</dbReference>
<dbReference type="RefSeq" id="YP_889211.1">
    <property type="nucleotide sequence ID" value="NC_008596.1"/>
</dbReference>
<dbReference type="SMR" id="Q9X5M0"/>
<dbReference type="STRING" id="246196.MSMEG_4959"/>
<dbReference type="PaxDb" id="246196-MSMEI_4832"/>
<dbReference type="GeneID" id="93459626"/>
<dbReference type="KEGG" id="msb:LJ00_24520"/>
<dbReference type="KEGG" id="msg:MSMEI_4832"/>
<dbReference type="KEGG" id="msm:MSMEG_4959"/>
<dbReference type="PATRIC" id="fig|246196.19.peg.4838"/>
<dbReference type="eggNOG" id="COG0018">
    <property type="taxonomic scope" value="Bacteria"/>
</dbReference>
<dbReference type="OrthoDB" id="9803211at2"/>
<dbReference type="Proteomes" id="UP000000757">
    <property type="component" value="Chromosome"/>
</dbReference>
<dbReference type="Proteomes" id="UP000006158">
    <property type="component" value="Chromosome"/>
</dbReference>
<dbReference type="GO" id="GO:0005737">
    <property type="term" value="C:cytoplasm"/>
    <property type="evidence" value="ECO:0007669"/>
    <property type="project" value="UniProtKB-SubCell"/>
</dbReference>
<dbReference type="GO" id="GO:0004814">
    <property type="term" value="F:arginine-tRNA ligase activity"/>
    <property type="evidence" value="ECO:0007669"/>
    <property type="project" value="UniProtKB-UniRule"/>
</dbReference>
<dbReference type="GO" id="GO:0005524">
    <property type="term" value="F:ATP binding"/>
    <property type="evidence" value="ECO:0007669"/>
    <property type="project" value="UniProtKB-UniRule"/>
</dbReference>
<dbReference type="GO" id="GO:0006420">
    <property type="term" value="P:arginyl-tRNA aminoacylation"/>
    <property type="evidence" value="ECO:0007669"/>
    <property type="project" value="UniProtKB-UniRule"/>
</dbReference>
<dbReference type="CDD" id="cd07956">
    <property type="entry name" value="Anticodon_Ia_Arg"/>
    <property type="match status" value="1"/>
</dbReference>
<dbReference type="CDD" id="cd00671">
    <property type="entry name" value="ArgRS_core"/>
    <property type="match status" value="1"/>
</dbReference>
<dbReference type="FunFam" id="1.10.730.10:FF:000008">
    <property type="entry name" value="Arginine--tRNA ligase"/>
    <property type="match status" value="1"/>
</dbReference>
<dbReference type="FunFam" id="3.40.50.620:FF:000062">
    <property type="entry name" value="Arginine--tRNA ligase"/>
    <property type="match status" value="1"/>
</dbReference>
<dbReference type="Gene3D" id="3.30.1360.70">
    <property type="entry name" value="Arginyl tRNA synthetase N-terminal domain"/>
    <property type="match status" value="1"/>
</dbReference>
<dbReference type="Gene3D" id="3.40.50.620">
    <property type="entry name" value="HUPs"/>
    <property type="match status" value="1"/>
</dbReference>
<dbReference type="Gene3D" id="1.10.730.10">
    <property type="entry name" value="Isoleucyl-tRNA Synthetase, Domain 1"/>
    <property type="match status" value="1"/>
</dbReference>
<dbReference type="HAMAP" id="MF_00123">
    <property type="entry name" value="Arg_tRNA_synth"/>
    <property type="match status" value="1"/>
</dbReference>
<dbReference type="InterPro" id="IPR001412">
    <property type="entry name" value="aa-tRNA-synth_I_CS"/>
</dbReference>
<dbReference type="InterPro" id="IPR001278">
    <property type="entry name" value="Arg-tRNA-ligase"/>
</dbReference>
<dbReference type="InterPro" id="IPR005148">
    <property type="entry name" value="Arg-tRNA-synth_N"/>
</dbReference>
<dbReference type="InterPro" id="IPR036695">
    <property type="entry name" value="Arg-tRNA-synth_N_sf"/>
</dbReference>
<dbReference type="InterPro" id="IPR035684">
    <property type="entry name" value="ArgRS_core"/>
</dbReference>
<dbReference type="InterPro" id="IPR008909">
    <property type="entry name" value="DALR_anticod-bd"/>
</dbReference>
<dbReference type="InterPro" id="IPR014729">
    <property type="entry name" value="Rossmann-like_a/b/a_fold"/>
</dbReference>
<dbReference type="InterPro" id="IPR009080">
    <property type="entry name" value="tRNAsynth_Ia_anticodon-bd"/>
</dbReference>
<dbReference type="NCBIfam" id="TIGR00456">
    <property type="entry name" value="argS"/>
    <property type="match status" value="1"/>
</dbReference>
<dbReference type="PANTHER" id="PTHR11956:SF5">
    <property type="entry name" value="ARGININE--TRNA LIGASE, CYTOPLASMIC"/>
    <property type="match status" value="1"/>
</dbReference>
<dbReference type="PANTHER" id="PTHR11956">
    <property type="entry name" value="ARGINYL-TRNA SYNTHETASE"/>
    <property type="match status" value="1"/>
</dbReference>
<dbReference type="Pfam" id="PF03485">
    <property type="entry name" value="Arg_tRNA_synt_N"/>
    <property type="match status" value="1"/>
</dbReference>
<dbReference type="Pfam" id="PF05746">
    <property type="entry name" value="DALR_1"/>
    <property type="match status" value="1"/>
</dbReference>
<dbReference type="Pfam" id="PF00750">
    <property type="entry name" value="tRNA-synt_1d"/>
    <property type="match status" value="1"/>
</dbReference>
<dbReference type="PRINTS" id="PR01038">
    <property type="entry name" value="TRNASYNTHARG"/>
</dbReference>
<dbReference type="SMART" id="SM01016">
    <property type="entry name" value="Arg_tRNA_synt_N"/>
    <property type="match status" value="1"/>
</dbReference>
<dbReference type="SMART" id="SM00836">
    <property type="entry name" value="DALR_1"/>
    <property type="match status" value="1"/>
</dbReference>
<dbReference type="SUPFAM" id="SSF47323">
    <property type="entry name" value="Anticodon-binding domain of a subclass of class I aminoacyl-tRNA synthetases"/>
    <property type="match status" value="1"/>
</dbReference>
<dbReference type="SUPFAM" id="SSF55190">
    <property type="entry name" value="Arginyl-tRNA synthetase (ArgRS), N-terminal 'additional' domain"/>
    <property type="match status" value="1"/>
</dbReference>
<dbReference type="SUPFAM" id="SSF52374">
    <property type="entry name" value="Nucleotidylyl transferase"/>
    <property type="match status" value="1"/>
</dbReference>
<dbReference type="PROSITE" id="PS00178">
    <property type="entry name" value="AA_TRNA_LIGASE_I"/>
    <property type="match status" value="1"/>
</dbReference>
<name>SYR_MYCS2</name>
<keyword id="KW-0030">Aminoacyl-tRNA synthetase</keyword>
<keyword id="KW-0067">ATP-binding</keyword>
<keyword id="KW-0963">Cytoplasm</keyword>
<keyword id="KW-0436">Ligase</keyword>
<keyword id="KW-0547">Nucleotide-binding</keyword>
<keyword id="KW-0648">Protein biosynthesis</keyword>
<keyword id="KW-1185">Reference proteome</keyword>
<gene>
    <name type="primary">argS</name>
    <name type="ordered locus">MSMEG_4959</name>
    <name type="ordered locus">MSMEI_4832</name>
</gene>
<organism>
    <name type="scientific">Mycolicibacterium smegmatis (strain ATCC 700084 / mc(2)155)</name>
    <name type="common">Mycobacterium smegmatis</name>
    <dbReference type="NCBI Taxonomy" id="246196"/>
    <lineage>
        <taxon>Bacteria</taxon>
        <taxon>Bacillati</taxon>
        <taxon>Actinomycetota</taxon>
        <taxon>Actinomycetes</taxon>
        <taxon>Mycobacteriales</taxon>
        <taxon>Mycobacteriaceae</taxon>
        <taxon>Mycolicibacterium</taxon>
    </lineage>
</organism>
<proteinExistence type="inferred from homology"/>
<reference key="1">
    <citation type="submission" date="1999-02" db="EMBL/GenBank/DDBJ databases">
        <title>A comparison of the construction of unmarked deletion mutations in Mycobacterium smegmatis, M. bovis bacille Calmette-Guerin (BCG) and M. tuberculosis H37Rv by allelic exchange.</title>
        <authorList>
            <person name="Pavelka M.S. Jr."/>
            <person name="Jacobs W.R. Jr."/>
        </authorList>
    </citation>
    <scope>NUCLEOTIDE SEQUENCE [GENOMIC DNA]</scope>
</reference>
<reference key="2">
    <citation type="submission" date="2006-10" db="EMBL/GenBank/DDBJ databases">
        <authorList>
            <person name="Fleischmann R.D."/>
            <person name="Dodson R.J."/>
            <person name="Haft D.H."/>
            <person name="Merkel J.S."/>
            <person name="Nelson W.C."/>
            <person name="Fraser C.M."/>
        </authorList>
    </citation>
    <scope>NUCLEOTIDE SEQUENCE [LARGE SCALE GENOMIC DNA]</scope>
    <source>
        <strain>ATCC 700084 / mc(2)155</strain>
    </source>
</reference>
<reference key="3">
    <citation type="journal article" date="2007" name="Genome Biol.">
        <title>Interrupted coding sequences in Mycobacterium smegmatis: authentic mutations or sequencing errors?</title>
        <authorList>
            <person name="Deshayes C."/>
            <person name="Perrodou E."/>
            <person name="Gallien S."/>
            <person name="Euphrasie D."/>
            <person name="Schaeffer C."/>
            <person name="Van-Dorsselaer A."/>
            <person name="Poch O."/>
            <person name="Lecompte O."/>
            <person name="Reyrat J.-M."/>
        </authorList>
    </citation>
    <scope>NUCLEOTIDE SEQUENCE [LARGE SCALE GENOMIC DNA]</scope>
    <source>
        <strain>ATCC 700084 / mc(2)155</strain>
    </source>
</reference>
<reference key="4">
    <citation type="journal article" date="2009" name="Genome Res.">
        <title>Ortho-proteogenomics: multiple proteomes investigation through orthology and a new MS-based protocol.</title>
        <authorList>
            <person name="Gallien S."/>
            <person name="Perrodou E."/>
            <person name="Carapito C."/>
            <person name="Deshayes C."/>
            <person name="Reyrat J.-M."/>
            <person name="Van Dorsselaer A."/>
            <person name="Poch O."/>
            <person name="Schaeffer C."/>
            <person name="Lecompte O."/>
        </authorList>
    </citation>
    <scope>NUCLEOTIDE SEQUENCE [LARGE SCALE GENOMIC DNA]</scope>
    <source>
        <strain>ATCC 700084 / mc(2)155</strain>
    </source>
</reference>
<evidence type="ECO:0000250" key="1"/>
<evidence type="ECO:0000305" key="2"/>